<accession>B3MZN7</accession>
<organism>
    <name type="scientific">Drosophila ananassae</name>
    <name type="common">Fruit fly</name>
    <dbReference type="NCBI Taxonomy" id="7217"/>
    <lineage>
        <taxon>Eukaryota</taxon>
        <taxon>Metazoa</taxon>
        <taxon>Ecdysozoa</taxon>
        <taxon>Arthropoda</taxon>
        <taxon>Hexapoda</taxon>
        <taxon>Insecta</taxon>
        <taxon>Pterygota</taxon>
        <taxon>Neoptera</taxon>
        <taxon>Endopterygota</taxon>
        <taxon>Diptera</taxon>
        <taxon>Brachycera</taxon>
        <taxon>Muscomorpha</taxon>
        <taxon>Ephydroidea</taxon>
        <taxon>Drosophilidae</taxon>
        <taxon>Drosophila</taxon>
        <taxon>Sophophora</taxon>
    </lineage>
</organism>
<evidence type="ECO:0000250" key="1"/>
<evidence type="ECO:0000250" key="2">
    <source>
        <dbReference type="UniProtKB" id="Q96EN8"/>
    </source>
</evidence>
<evidence type="ECO:0000255" key="3">
    <source>
        <dbReference type="HAMAP-Rule" id="MF_03050"/>
    </source>
</evidence>
<comment type="function">
    <text evidence="3">Sulfurates the molybdenum cofactor. Sulfation of molybdenum is essential for xanthine dehydrogenase (XDH) and aldehyde oxidase (ADO) enzymes in which molybdenum cofactor is liganded by 1 oxygen and 1 sulfur atom in active form.</text>
</comment>
<comment type="catalytic activity">
    <reaction evidence="3">
        <text>Mo-molybdopterin + L-cysteine + AH2 = thio-Mo-molybdopterin + L-alanine + A + H2O</text>
        <dbReference type="Rhea" id="RHEA:42636"/>
        <dbReference type="ChEBI" id="CHEBI:13193"/>
        <dbReference type="ChEBI" id="CHEBI:15377"/>
        <dbReference type="ChEBI" id="CHEBI:17499"/>
        <dbReference type="ChEBI" id="CHEBI:35235"/>
        <dbReference type="ChEBI" id="CHEBI:57972"/>
        <dbReference type="ChEBI" id="CHEBI:71302"/>
        <dbReference type="ChEBI" id="CHEBI:82685"/>
        <dbReference type="EC" id="2.8.1.9"/>
    </reaction>
</comment>
<comment type="cofactor">
    <cofactor evidence="3">
        <name>pyridoxal 5'-phosphate</name>
        <dbReference type="ChEBI" id="CHEBI:597326"/>
    </cofactor>
</comment>
<comment type="pathway">
    <text evidence="2">Cofactor biosynthesis; molybdopterin biosynthesis.</text>
</comment>
<comment type="similarity">
    <text evidence="3">Belongs to the class-V pyridoxal-phosphate-dependent aminotransferase family. MOCOS subfamily.</text>
</comment>
<protein>
    <recommendedName>
        <fullName evidence="3">Molybdenum cofactor sulfurase</fullName>
        <shortName evidence="3">MCS</shortName>
        <shortName evidence="3">MOS</shortName>
        <shortName evidence="3">MoCo sulfurase</shortName>
        <ecNumber evidence="3">2.8.1.9</ecNumber>
    </recommendedName>
    <alternativeName>
        <fullName evidence="3">Molybdenum cofactor sulfurtransferase</fullName>
    </alternativeName>
    <alternativeName>
        <fullName evidence="3">Protein maroon-like</fullName>
        <shortName evidence="3">Ma-l</shortName>
    </alternativeName>
</protein>
<feature type="chain" id="PRO_0000369370" description="Molybdenum cofactor sulfurase">
    <location>
        <begin position="1"/>
        <end position="773"/>
    </location>
</feature>
<feature type="domain" description="MOSC" evidence="3">
    <location>
        <begin position="632"/>
        <end position="773"/>
    </location>
</feature>
<feature type="active site" evidence="3">
    <location>
        <position position="410"/>
    </location>
</feature>
<feature type="modified residue" description="N6-(pyridoxal phosphate)lysine" evidence="3">
    <location>
        <position position="243"/>
    </location>
</feature>
<feature type="modified residue" description="Phosphoserine" evidence="1">
    <location>
        <position position="731"/>
    </location>
</feature>
<gene>
    <name evidence="3" type="primary">mal</name>
    <name type="ORF">GF19210</name>
</gene>
<dbReference type="EC" id="2.8.1.9" evidence="3"/>
<dbReference type="EMBL" id="CH902635">
    <property type="protein sequence ID" value="EDV33838.1"/>
    <property type="molecule type" value="Genomic_DNA"/>
</dbReference>
<dbReference type="SMR" id="B3MZN7"/>
<dbReference type="FunCoup" id="B3MZN7">
    <property type="interactions" value="161"/>
</dbReference>
<dbReference type="STRING" id="7217.B3MZN7"/>
<dbReference type="EnsemblMetazoa" id="FBtr0123910">
    <property type="protein sequence ID" value="FBpp0122402"/>
    <property type="gene ID" value="FBgn0096221"/>
</dbReference>
<dbReference type="EnsemblMetazoa" id="XM_001966757.4">
    <property type="protein sequence ID" value="XP_001966793.1"/>
    <property type="gene ID" value="LOC6501972"/>
</dbReference>
<dbReference type="GeneID" id="6501972"/>
<dbReference type="KEGG" id="dan:6501972"/>
<dbReference type="CTD" id="4118"/>
<dbReference type="eggNOG" id="KOG2142">
    <property type="taxonomic scope" value="Eukaryota"/>
</dbReference>
<dbReference type="HOGENOM" id="CLU_010913_0_1_1"/>
<dbReference type="InParanoid" id="B3MZN7"/>
<dbReference type="OMA" id="PCTRCQM"/>
<dbReference type="OrthoDB" id="420046at2759"/>
<dbReference type="PhylomeDB" id="B3MZN7"/>
<dbReference type="UniPathway" id="UPA00344"/>
<dbReference type="Proteomes" id="UP000007801">
    <property type="component" value="Unassembled WGS sequence"/>
</dbReference>
<dbReference type="GO" id="GO:0016829">
    <property type="term" value="F:lyase activity"/>
    <property type="evidence" value="ECO:0007669"/>
    <property type="project" value="UniProtKB-UniRule"/>
</dbReference>
<dbReference type="GO" id="GO:0008265">
    <property type="term" value="F:molybdenum cofactor sulfurtransferase activity"/>
    <property type="evidence" value="ECO:0000250"/>
    <property type="project" value="UniProtKB"/>
</dbReference>
<dbReference type="GO" id="GO:0030151">
    <property type="term" value="F:molybdenum ion binding"/>
    <property type="evidence" value="ECO:0007669"/>
    <property type="project" value="UniProtKB-UniRule"/>
</dbReference>
<dbReference type="GO" id="GO:0030170">
    <property type="term" value="F:pyridoxal phosphate binding"/>
    <property type="evidence" value="ECO:0007669"/>
    <property type="project" value="UniProtKB-UniRule"/>
</dbReference>
<dbReference type="GO" id="GO:0006777">
    <property type="term" value="P:Mo-molybdopterin cofactor biosynthetic process"/>
    <property type="evidence" value="ECO:0007669"/>
    <property type="project" value="UniProtKB-UniRule"/>
</dbReference>
<dbReference type="GO" id="GO:0043545">
    <property type="term" value="P:molybdopterin cofactor metabolic process"/>
    <property type="evidence" value="ECO:0000250"/>
    <property type="project" value="UniProtKB"/>
</dbReference>
<dbReference type="FunFam" id="3.40.640.10:FF:000119">
    <property type="entry name" value="Molybdenum cofactor sulfurase"/>
    <property type="match status" value="1"/>
</dbReference>
<dbReference type="FunFam" id="3.90.1150.10:FF:000079">
    <property type="entry name" value="Molybdenum cofactor sulfurase"/>
    <property type="match status" value="1"/>
</dbReference>
<dbReference type="Gene3D" id="3.90.1150.10">
    <property type="entry name" value="Aspartate Aminotransferase, domain 1"/>
    <property type="match status" value="1"/>
</dbReference>
<dbReference type="Gene3D" id="3.40.640.10">
    <property type="entry name" value="Type I PLP-dependent aspartate aminotransferase-like (Major domain)"/>
    <property type="match status" value="1"/>
</dbReference>
<dbReference type="HAMAP" id="MF_03050">
    <property type="entry name" value="MOCOS"/>
    <property type="match status" value="1"/>
</dbReference>
<dbReference type="InterPro" id="IPR000192">
    <property type="entry name" value="Aminotrans_V_dom"/>
</dbReference>
<dbReference type="InterPro" id="IPR005302">
    <property type="entry name" value="MoCF_Sase_C"/>
</dbReference>
<dbReference type="InterPro" id="IPR028886">
    <property type="entry name" value="MoCo_sulfurase"/>
</dbReference>
<dbReference type="InterPro" id="IPR005303">
    <property type="entry name" value="MOCOS_middle"/>
</dbReference>
<dbReference type="InterPro" id="IPR015424">
    <property type="entry name" value="PyrdxlP-dep_Trfase"/>
</dbReference>
<dbReference type="InterPro" id="IPR015421">
    <property type="entry name" value="PyrdxlP-dep_Trfase_major"/>
</dbReference>
<dbReference type="InterPro" id="IPR015422">
    <property type="entry name" value="PyrdxlP-dep_Trfase_small"/>
</dbReference>
<dbReference type="InterPro" id="IPR011037">
    <property type="entry name" value="Pyrv_Knase-like_insert_dom_sf"/>
</dbReference>
<dbReference type="PANTHER" id="PTHR14237:SF19">
    <property type="entry name" value="MITOCHONDRIAL AMIDOXIME REDUCING COMPONENT 1"/>
    <property type="match status" value="1"/>
</dbReference>
<dbReference type="PANTHER" id="PTHR14237">
    <property type="entry name" value="MOLYBDOPTERIN COFACTOR SULFURASE MOSC"/>
    <property type="match status" value="1"/>
</dbReference>
<dbReference type="Pfam" id="PF00266">
    <property type="entry name" value="Aminotran_5"/>
    <property type="match status" value="2"/>
</dbReference>
<dbReference type="Pfam" id="PF03473">
    <property type="entry name" value="MOSC"/>
    <property type="match status" value="1"/>
</dbReference>
<dbReference type="Pfam" id="PF03476">
    <property type="entry name" value="MOSC_N"/>
    <property type="match status" value="1"/>
</dbReference>
<dbReference type="SUPFAM" id="SSF141673">
    <property type="entry name" value="MOSC N-terminal domain-like"/>
    <property type="match status" value="1"/>
</dbReference>
<dbReference type="SUPFAM" id="SSF50800">
    <property type="entry name" value="PK beta-barrel domain-like"/>
    <property type="match status" value="1"/>
</dbReference>
<dbReference type="SUPFAM" id="SSF53383">
    <property type="entry name" value="PLP-dependent transferases"/>
    <property type="match status" value="1"/>
</dbReference>
<dbReference type="PROSITE" id="PS51340">
    <property type="entry name" value="MOSC"/>
    <property type="match status" value="1"/>
</dbReference>
<keyword id="KW-0501">Molybdenum cofactor biosynthesis</keyword>
<keyword id="KW-0597">Phosphoprotein</keyword>
<keyword id="KW-0663">Pyridoxal phosphate</keyword>
<keyword id="KW-1185">Reference proteome</keyword>
<keyword id="KW-0808">Transferase</keyword>
<reference key="1">
    <citation type="journal article" date="2007" name="Nature">
        <title>Evolution of genes and genomes on the Drosophila phylogeny.</title>
        <authorList>
            <consortium name="Drosophila 12 genomes consortium"/>
        </authorList>
    </citation>
    <scope>NUCLEOTIDE SEQUENCE [LARGE SCALE GENOMIC DNA]</scope>
    <source>
        <strain>Tucson 14024-0371.13</strain>
    </source>
</reference>
<sequence length="773" mass="86857">MTLYSPEFSESEQSKIDAEFSRLTENKSVYLDHAGTTLYAESQVKAAAEQLQRNVICNPHTCRLTGDFVDQVRYKVLEFFNTTSEDYHVIFTANATASLSLVAENFDFGSFGNFHFCQENHTSVLGMRERVSHAKGIYMLTEREITGCSLQNGSSKEKPTDPGRSLVTFSAQCNFSGYKIPLDAIGNIQENGLHTPGKHIWGTEGKTSNNDYYICLDAASFVATNPLDLKRYRPDFVCLSFYKIFGYPTGVGALLVSKRGAEAFRDRKFFGGGTINYAYPHTMEYQLRESFHQRYEDGTLPFLAIVGLLEGFRTLERIVPKTKELATMERISRHVHGLAKYLEDQLKQLKHPNGEPLIQLYNKAGYQDRTRQGGIVAFNVRTDSGDYVGFGEIACVAALHGILLRTGCFCNIGACQYYLGLDGDAMDAIYKRAGRICGDYFDLIDGQPTGAVRVSFGYMTTIHDVEELLKMLRSSYLATKPQQRILFIEEQAGQLPPVLQKRVQNLRPKLLQMAIFPVKSCAAFKIEGYLKSWPLTDQGLKYDREWMIVDMNGMALTQKRCTELCLIRPLIKNDVLELHFGDSCVSVPLSLEDQAADSAKCVSKVCRQPVEGLDCGERVAEWLSTNLGQDGLRLLRQSGQRNSSKDQQKLSLVNQAQFLLVNRSSVRSLQFEEPLDDTVDRFRANIIIDTGLAFEELSFKQLSIGKVQFQVQGPCQRCDMICINQKTGERSPETLTTISRLQSGRMRFGIYITRISKDTGDLQLSCGDTVLVE</sequence>
<name>MOCOS_DROAN</name>
<proteinExistence type="inferred from homology"/>